<proteinExistence type="inferred from homology"/>
<feature type="chain" id="PRO_0000214590" description="UPF0260 protein RCAP_rcc02083">
    <location>
        <begin position="1"/>
        <end position="149"/>
    </location>
</feature>
<keyword id="KW-1185">Reference proteome</keyword>
<evidence type="ECO:0000255" key="1">
    <source>
        <dbReference type="HAMAP-Rule" id="MF_00676"/>
    </source>
</evidence>
<gene>
    <name type="ordered locus">RCAP_rcc02083</name>
</gene>
<name>Y2083_RHOCB</name>
<accession>O68068</accession>
<accession>D5AV44</accession>
<reference key="1">
    <citation type="journal article" date="1997" name="Proc. Natl. Acad. Sci. U.S.A.">
        <title>Sequence of a 189-kb segment of the chromosome of Rhodobacter capsulatus SB1003.</title>
        <authorList>
            <person name="Vlcek C."/>
            <person name="Paces V."/>
            <person name="Maltsev N."/>
            <person name="Paces J."/>
            <person name="Haselkorn R."/>
            <person name="Fonstein M."/>
        </authorList>
    </citation>
    <scope>NUCLEOTIDE SEQUENCE [GENOMIC DNA]</scope>
    <source>
        <strain>ATCC BAA-309 / NBRC 16581 / SB1003</strain>
    </source>
</reference>
<reference key="2">
    <citation type="journal article" date="2010" name="J. Bacteriol.">
        <title>Complete genome sequence of the photosynthetic purple nonsulfur bacterium Rhodobacter capsulatus SB 1003.</title>
        <authorList>
            <person name="Strnad H."/>
            <person name="Lapidus A."/>
            <person name="Paces J."/>
            <person name="Ulbrich P."/>
            <person name="Vlcek C."/>
            <person name="Paces V."/>
            <person name="Haselkorn R."/>
        </authorList>
    </citation>
    <scope>NUCLEOTIDE SEQUENCE [LARGE SCALE GENOMIC DNA]</scope>
    <source>
        <strain>ATCC BAA-309 / NBRC 16581 / SB1003</strain>
    </source>
</reference>
<sequence length="149" mass="17380">MSSNLRPLFWTLPLTRLTPAEWEALCDGCGKCCLNKLEYEDTGELEFTRVACRLLDGESCRCRNYEIRHQFVPECVRLTPKSLKKSVYWMPATCAYRLRYEGRPLEPWHYLISGDPETVHDAGQSVRGWTVSEAEVPEEDWQDYIIEDL</sequence>
<dbReference type="EMBL" id="AF010496">
    <property type="protein sequence ID" value="AAC16154.1"/>
    <property type="molecule type" value="Genomic_DNA"/>
</dbReference>
<dbReference type="EMBL" id="CP001312">
    <property type="protein sequence ID" value="ADE85826.1"/>
    <property type="molecule type" value="Genomic_DNA"/>
</dbReference>
<dbReference type="PIR" id="T03501">
    <property type="entry name" value="T03501"/>
</dbReference>
<dbReference type="RefSeq" id="WP_013067805.1">
    <property type="nucleotide sequence ID" value="NC_014034.1"/>
</dbReference>
<dbReference type="STRING" id="272942.RCAP_rcc02083"/>
<dbReference type="GeneID" id="31490944"/>
<dbReference type="KEGG" id="rcp:RCAP_rcc02083"/>
<dbReference type="eggNOG" id="COG2983">
    <property type="taxonomic scope" value="Bacteria"/>
</dbReference>
<dbReference type="HOGENOM" id="CLU_109769_1_0_5"/>
<dbReference type="OrthoDB" id="9786855at2"/>
<dbReference type="Proteomes" id="UP000002361">
    <property type="component" value="Chromosome"/>
</dbReference>
<dbReference type="HAMAP" id="MF_00676">
    <property type="entry name" value="UPF0260"/>
    <property type="match status" value="1"/>
</dbReference>
<dbReference type="InterPro" id="IPR005358">
    <property type="entry name" value="Puta_zinc/iron-chelating_dom"/>
</dbReference>
<dbReference type="InterPro" id="IPR008228">
    <property type="entry name" value="UCP006173"/>
</dbReference>
<dbReference type="NCBIfam" id="NF003501">
    <property type="entry name" value="PRK05170.1-5"/>
    <property type="match status" value="1"/>
</dbReference>
<dbReference type="NCBIfam" id="NF003507">
    <property type="entry name" value="PRK05170.2-5"/>
    <property type="match status" value="1"/>
</dbReference>
<dbReference type="PANTHER" id="PTHR37421">
    <property type="entry name" value="UPF0260 PROTEIN YCGN"/>
    <property type="match status" value="1"/>
</dbReference>
<dbReference type="PANTHER" id="PTHR37421:SF1">
    <property type="entry name" value="UPF0260 PROTEIN YCGN"/>
    <property type="match status" value="1"/>
</dbReference>
<dbReference type="Pfam" id="PF03692">
    <property type="entry name" value="CxxCxxCC"/>
    <property type="match status" value="1"/>
</dbReference>
<dbReference type="PIRSF" id="PIRSF006173">
    <property type="entry name" value="UCP006173"/>
    <property type="match status" value="1"/>
</dbReference>
<protein>
    <recommendedName>
        <fullName evidence="1">UPF0260 protein RCAP_rcc02083</fullName>
    </recommendedName>
</protein>
<comment type="similarity">
    <text evidence="1">Belongs to the UPF0260 family.</text>
</comment>
<organism>
    <name type="scientific">Rhodobacter capsulatus (strain ATCC BAA-309 / NBRC 16581 / SB1003)</name>
    <dbReference type="NCBI Taxonomy" id="272942"/>
    <lineage>
        <taxon>Bacteria</taxon>
        <taxon>Pseudomonadati</taxon>
        <taxon>Pseudomonadota</taxon>
        <taxon>Alphaproteobacteria</taxon>
        <taxon>Rhodobacterales</taxon>
        <taxon>Rhodobacter group</taxon>
        <taxon>Rhodobacter</taxon>
    </lineage>
</organism>